<organism>
    <name type="scientific">Synechocystis sp. (strain PCC 6714)</name>
    <name type="common">Aphanocapsa sp. (strain PCC 6714)</name>
    <dbReference type="NCBI Taxonomy" id="1147"/>
    <lineage>
        <taxon>Bacteria</taxon>
        <taxon>Bacillati</taxon>
        <taxon>Cyanobacteriota</taxon>
        <taxon>Cyanophyceae</taxon>
        <taxon>Synechococcales</taxon>
        <taxon>Merismopediaceae</taxon>
        <taxon>Synechocystis</taxon>
    </lineage>
</organism>
<feature type="chain" id="PRO_0000199241" description="Phycobilisome 7.8 kDa linker polypeptide, allophycocyanin-associated, core">
    <location>
        <begin position="1"/>
        <end position="67"/>
    </location>
</feature>
<feature type="domain" description="CpcD-like" evidence="2">
    <location>
        <begin position="1"/>
        <end position="56"/>
    </location>
</feature>
<accession>Q02925</accession>
<keyword id="KW-0002">3D-structure</keyword>
<keyword id="KW-0042">Antenna complex</keyword>
<keyword id="KW-0472">Membrane</keyword>
<keyword id="KW-0602">Photosynthesis</keyword>
<keyword id="KW-0605">Phycobilisome</keyword>
<keyword id="KW-0793">Thylakoid</keyword>
<protein>
    <recommendedName>
        <fullName>Phycobilisome 7.8 kDa linker polypeptide, allophycocyanin-associated, core</fullName>
    </recommendedName>
    <alternativeName>
        <fullName>LC 7.8</fullName>
    </alternativeName>
</protein>
<dbReference type="EMBL" id="L02308">
    <property type="protein sequence ID" value="AAA69684.1"/>
    <property type="molecule type" value="Genomic_DNA"/>
</dbReference>
<dbReference type="PIR" id="S59989">
    <property type="entry name" value="S59989"/>
</dbReference>
<dbReference type="RefSeq" id="WP_010872505.1">
    <property type="nucleotide sequence ID" value="NZ_CP007542.1"/>
</dbReference>
<dbReference type="PDB" id="8TO2">
    <property type="method" value="EM"/>
    <property type="resolution" value="2.00 A"/>
    <property type="chains" value="C/c=1-67"/>
</dbReference>
<dbReference type="PDB" id="8TPJ">
    <property type="method" value="EM"/>
    <property type="resolution" value="2.10 A"/>
    <property type="chains" value="C=1-67"/>
</dbReference>
<dbReference type="PDBsum" id="8TO2"/>
<dbReference type="PDBsum" id="8TPJ"/>
<dbReference type="EMDB" id="EMD-41434"/>
<dbReference type="EMDB" id="EMD-41475"/>
<dbReference type="SMR" id="Q02925"/>
<dbReference type="STRING" id="1147.D082_33970"/>
<dbReference type="eggNOG" id="ENOG5032S63">
    <property type="taxonomic scope" value="Bacteria"/>
</dbReference>
<dbReference type="OrthoDB" id="515602at2"/>
<dbReference type="GO" id="GO:0030089">
    <property type="term" value="C:phycobilisome"/>
    <property type="evidence" value="ECO:0007669"/>
    <property type="project" value="UniProtKB-KW"/>
</dbReference>
<dbReference type="GO" id="GO:0031676">
    <property type="term" value="C:plasma membrane-derived thylakoid membrane"/>
    <property type="evidence" value="ECO:0007669"/>
    <property type="project" value="UniProtKB-SubCell"/>
</dbReference>
<dbReference type="GO" id="GO:0015979">
    <property type="term" value="P:photosynthesis"/>
    <property type="evidence" value="ECO:0007669"/>
    <property type="project" value="UniProtKB-KW"/>
</dbReference>
<dbReference type="Gene3D" id="3.30.1490.170">
    <property type="entry name" value="Allophycocyanin linker chain (domain)"/>
    <property type="match status" value="1"/>
</dbReference>
<dbReference type="InterPro" id="IPR011134">
    <property type="entry name" value="Allophyco_linker"/>
</dbReference>
<dbReference type="InterPro" id="IPR011064">
    <property type="entry name" value="Allophyco_linker_chain"/>
</dbReference>
<dbReference type="InterPro" id="IPR008213">
    <property type="entry name" value="CpcD-like_dom"/>
</dbReference>
<dbReference type="Pfam" id="PF01383">
    <property type="entry name" value="CpcD"/>
    <property type="match status" value="1"/>
</dbReference>
<dbReference type="PIRSF" id="PIRSF000083">
    <property type="entry name" value="Allophyco_linker"/>
    <property type="match status" value="1"/>
</dbReference>
<dbReference type="SMART" id="SM01094">
    <property type="entry name" value="CpcD"/>
    <property type="match status" value="1"/>
</dbReference>
<dbReference type="SUPFAM" id="SSF54580">
    <property type="entry name" value="Allophycocyanin linker chain (domain)"/>
    <property type="match status" value="1"/>
</dbReference>
<dbReference type="PROSITE" id="PS51441">
    <property type="entry name" value="CPCD_LIKE"/>
    <property type="match status" value="1"/>
</dbReference>
<reference key="1">
    <citation type="journal article" date="1993" name="Plant Mol. Biol.">
        <title>Isolation and characterization of the genes encoding allophycocyanin subunits and two linker proteins from Synechocystis 6714.</title>
        <authorList>
            <person name="Dimagno L.M."/>
            <person name="Haselkorn R."/>
        </authorList>
    </citation>
    <scope>NUCLEOTIDE SEQUENCE [GENOMIC DNA]</scope>
</reference>
<proteinExistence type="evidence at protein level"/>
<comment type="function">
    <text evidence="1">Rod linker protein, associated with allophycocyanin. Linker polypeptides determine the state of aggregation and the location of the disk-shaped phycobiliprotein units within the phycobilisome and modulate their spectroscopic properties in order to mediate a directed and optimal energy transfer (By similarity).</text>
</comment>
<comment type="subcellular location">
    <subcellularLocation>
        <location evidence="1">Cellular thylakoid membrane</location>
        <topology evidence="1">Peripheral membrane protein</topology>
        <orientation evidence="1">Cytoplasmic side</orientation>
    </subcellularLocation>
    <text>This protein occurs in the rod, it is associated with allophycocyanin.</text>
</comment>
<comment type="similarity">
    <text evidence="3">Belongs to the phycobilisome linker protein family.</text>
</comment>
<name>PYC1_SYNY4</name>
<evidence type="ECO:0000250" key="1"/>
<evidence type="ECO:0000255" key="2">
    <source>
        <dbReference type="PROSITE-ProRule" id="PRU00771"/>
    </source>
</evidence>
<evidence type="ECO:0000305" key="3"/>
<sequence length="67" mass="7805">MRMFRITACVPSQTRIRTQRELQNTYFTKLVPYDNWFREQQRIMKMGGKIVKVELATGRPGTNAGLA</sequence>
<gene>
    <name type="primary">apcC</name>
</gene>